<organism>
    <name type="scientific">Vibrio parahaemolyticus serotype O3:K6 (strain RIMD 2210633)</name>
    <dbReference type="NCBI Taxonomy" id="223926"/>
    <lineage>
        <taxon>Bacteria</taxon>
        <taxon>Pseudomonadati</taxon>
        <taxon>Pseudomonadota</taxon>
        <taxon>Gammaproteobacteria</taxon>
        <taxon>Vibrionales</taxon>
        <taxon>Vibrionaceae</taxon>
        <taxon>Vibrio</taxon>
    </lineage>
</organism>
<protein>
    <recommendedName>
        <fullName evidence="1">Thiosulfate sulfurtransferase GlpE</fullName>
        <ecNumber evidence="1">2.8.1.1</ecNumber>
    </recommendedName>
</protein>
<keyword id="KW-0963">Cytoplasm</keyword>
<keyword id="KW-0808">Transferase</keyword>
<comment type="function">
    <text evidence="1">Transferase that catalyzes the transfer of sulfur from thiosulfate to thiophilic acceptors such as cyanide or dithiols. May function in a CysM-independent thiosulfate assimilation pathway by catalyzing the conversion of thiosulfate to sulfite, which can then be used for L-cysteine biosynthesis.</text>
</comment>
<comment type="catalytic activity">
    <reaction evidence="1">
        <text>thiosulfate + hydrogen cyanide = thiocyanate + sulfite + 2 H(+)</text>
        <dbReference type="Rhea" id="RHEA:16881"/>
        <dbReference type="ChEBI" id="CHEBI:15378"/>
        <dbReference type="ChEBI" id="CHEBI:17359"/>
        <dbReference type="ChEBI" id="CHEBI:18022"/>
        <dbReference type="ChEBI" id="CHEBI:18407"/>
        <dbReference type="ChEBI" id="CHEBI:33542"/>
        <dbReference type="EC" id="2.8.1.1"/>
    </reaction>
</comment>
<comment type="catalytic activity">
    <reaction evidence="1">
        <text>thiosulfate + [thioredoxin]-dithiol = [thioredoxin]-disulfide + hydrogen sulfide + sulfite + 2 H(+)</text>
        <dbReference type="Rhea" id="RHEA:83859"/>
        <dbReference type="Rhea" id="RHEA-COMP:10698"/>
        <dbReference type="Rhea" id="RHEA-COMP:10700"/>
        <dbReference type="ChEBI" id="CHEBI:15378"/>
        <dbReference type="ChEBI" id="CHEBI:17359"/>
        <dbReference type="ChEBI" id="CHEBI:29919"/>
        <dbReference type="ChEBI" id="CHEBI:29950"/>
        <dbReference type="ChEBI" id="CHEBI:33542"/>
        <dbReference type="ChEBI" id="CHEBI:50058"/>
    </reaction>
</comment>
<comment type="subcellular location">
    <subcellularLocation>
        <location evidence="1">Cytoplasm</location>
    </subcellularLocation>
</comment>
<comment type="similarity">
    <text evidence="1">Belongs to the GlpE family.</text>
</comment>
<feature type="chain" id="PRO_0000200568" description="Thiosulfate sulfurtransferase GlpE">
    <location>
        <begin position="1"/>
        <end position="106"/>
    </location>
</feature>
<feature type="domain" description="Rhodanese" evidence="1">
    <location>
        <begin position="17"/>
        <end position="105"/>
    </location>
</feature>
<feature type="active site" description="Cysteine persulfide intermediate" evidence="1">
    <location>
        <position position="65"/>
    </location>
</feature>
<sequence>MDQFQHIDVQGAQALLEQGEAKLVDIRDPQSFAVAHAESAYHLTNDTIVAFMEDVEFEQPILVMCYHGISSQGAAQYLVNQGFEQVYSVDGGFEAWQRAQLPIVRS</sequence>
<name>GLPE_VIBPA</name>
<gene>
    <name evidence="1" type="primary">glpE</name>
    <name type="ordered locus">VP2952</name>
</gene>
<evidence type="ECO:0000255" key="1">
    <source>
        <dbReference type="HAMAP-Rule" id="MF_01009"/>
    </source>
</evidence>
<accession>Q87KM5</accession>
<reference key="1">
    <citation type="journal article" date="2003" name="Lancet">
        <title>Genome sequence of Vibrio parahaemolyticus: a pathogenic mechanism distinct from that of V. cholerae.</title>
        <authorList>
            <person name="Makino K."/>
            <person name="Oshima K."/>
            <person name="Kurokawa K."/>
            <person name="Yokoyama K."/>
            <person name="Uda T."/>
            <person name="Tagomori K."/>
            <person name="Iijima Y."/>
            <person name="Najima M."/>
            <person name="Nakano M."/>
            <person name="Yamashita A."/>
            <person name="Kubota Y."/>
            <person name="Kimura S."/>
            <person name="Yasunaga T."/>
            <person name="Honda T."/>
            <person name="Shinagawa H."/>
            <person name="Hattori M."/>
            <person name="Iida T."/>
        </authorList>
    </citation>
    <scope>NUCLEOTIDE SEQUENCE [LARGE SCALE GENOMIC DNA]</scope>
    <source>
        <strain>RIMD 2210633</strain>
    </source>
</reference>
<proteinExistence type="inferred from homology"/>
<dbReference type="EC" id="2.8.1.1" evidence="1"/>
<dbReference type="EMBL" id="BA000031">
    <property type="protein sequence ID" value="BAC61215.1"/>
    <property type="molecule type" value="Genomic_DNA"/>
</dbReference>
<dbReference type="RefSeq" id="NP_799331.1">
    <property type="nucleotide sequence ID" value="NC_004603.1"/>
</dbReference>
<dbReference type="RefSeq" id="WP_005460380.1">
    <property type="nucleotide sequence ID" value="NC_004603.1"/>
</dbReference>
<dbReference type="SMR" id="Q87KM5"/>
<dbReference type="GeneID" id="1190538"/>
<dbReference type="KEGG" id="vpa:VP2952"/>
<dbReference type="PATRIC" id="fig|223926.6.peg.2841"/>
<dbReference type="eggNOG" id="COG0607">
    <property type="taxonomic scope" value="Bacteria"/>
</dbReference>
<dbReference type="HOGENOM" id="CLU_089574_14_0_6"/>
<dbReference type="Proteomes" id="UP000002493">
    <property type="component" value="Chromosome 1"/>
</dbReference>
<dbReference type="GO" id="GO:0005737">
    <property type="term" value="C:cytoplasm"/>
    <property type="evidence" value="ECO:0007669"/>
    <property type="project" value="UniProtKB-SubCell"/>
</dbReference>
<dbReference type="GO" id="GO:0004792">
    <property type="term" value="F:thiosulfate-cyanide sulfurtransferase activity"/>
    <property type="evidence" value="ECO:0007669"/>
    <property type="project" value="UniProtKB-UniRule"/>
</dbReference>
<dbReference type="GO" id="GO:0006071">
    <property type="term" value="P:glycerol metabolic process"/>
    <property type="evidence" value="ECO:0007669"/>
    <property type="project" value="UniProtKB-UniRule"/>
</dbReference>
<dbReference type="CDD" id="cd01444">
    <property type="entry name" value="GlpE_ST"/>
    <property type="match status" value="1"/>
</dbReference>
<dbReference type="Gene3D" id="3.40.250.10">
    <property type="entry name" value="Rhodanese-like domain"/>
    <property type="match status" value="1"/>
</dbReference>
<dbReference type="HAMAP" id="MF_01009">
    <property type="entry name" value="Thiosulf_sulfurtr"/>
    <property type="match status" value="1"/>
</dbReference>
<dbReference type="InterPro" id="IPR050229">
    <property type="entry name" value="GlpE_sulfurtransferase"/>
</dbReference>
<dbReference type="InterPro" id="IPR001763">
    <property type="entry name" value="Rhodanese-like_dom"/>
</dbReference>
<dbReference type="InterPro" id="IPR036873">
    <property type="entry name" value="Rhodanese-like_dom_sf"/>
</dbReference>
<dbReference type="InterPro" id="IPR023695">
    <property type="entry name" value="Thiosulf_sulfurTrfase"/>
</dbReference>
<dbReference type="NCBIfam" id="NF001195">
    <property type="entry name" value="PRK00162.1"/>
    <property type="match status" value="1"/>
</dbReference>
<dbReference type="PANTHER" id="PTHR43031">
    <property type="entry name" value="FAD-DEPENDENT OXIDOREDUCTASE"/>
    <property type="match status" value="1"/>
</dbReference>
<dbReference type="PANTHER" id="PTHR43031:SF6">
    <property type="entry name" value="THIOSULFATE SULFURTRANSFERASE GLPE"/>
    <property type="match status" value="1"/>
</dbReference>
<dbReference type="Pfam" id="PF00581">
    <property type="entry name" value="Rhodanese"/>
    <property type="match status" value="1"/>
</dbReference>
<dbReference type="SMART" id="SM00450">
    <property type="entry name" value="RHOD"/>
    <property type="match status" value="1"/>
</dbReference>
<dbReference type="SUPFAM" id="SSF52821">
    <property type="entry name" value="Rhodanese/Cell cycle control phosphatase"/>
    <property type="match status" value="1"/>
</dbReference>
<dbReference type="PROSITE" id="PS50206">
    <property type="entry name" value="RHODANESE_3"/>
    <property type="match status" value="1"/>
</dbReference>